<sequence length="337" mass="36113">MSVEVFYDDDADLGLIQGRTVAVIGYGSQGHAHALSLRDSGVDVVIGLPAGSKSRPKAEEQGLRVRTPAEAAAEADIIMILAPDTAQRALYTESIAPHLAAGKALFFGHGFNIRYGLIQPPADVDVAMVAPKGPGHLVRRQYVDGKGVPCLVAVEQDASGNAFGLALAYAKAIGGTRAGAIRTTFTEETETDLFGEQAVLCGGAAALVQTGFEVLTEAGYAPEVAYFECLHELKLIVDLMYEGGIARMRYSISDTAEYGDLSRGPRVIDSQVKERMRAILGEIRSGEFAREWVAEDEAGRPNFAKWRAESAAHPIEETGSKLRGMMSWVDRPITETA</sequence>
<organism>
    <name type="scientific">Salinispora arenicola (strain CNS-205)</name>
    <dbReference type="NCBI Taxonomy" id="391037"/>
    <lineage>
        <taxon>Bacteria</taxon>
        <taxon>Bacillati</taxon>
        <taxon>Actinomycetota</taxon>
        <taxon>Actinomycetes</taxon>
        <taxon>Micromonosporales</taxon>
        <taxon>Micromonosporaceae</taxon>
        <taxon>Salinispora</taxon>
    </lineage>
</organism>
<protein>
    <recommendedName>
        <fullName evidence="1">Ketol-acid reductoisomerase (NADP(+))</fullName>
        <shortName evidence="1">KARI</shortName>
        <ecNumber evidence="1">1.1.1.86</ecNumber>
    </recommendedName>
    <alternativeName>
        <fullName evidence="1">Acetohydroxy-acid isomeroreductase</fullName>
        <shortName evidence="1">AHIR</shortName>
    </alternativeName>
    <alternativeName>
        <fullName evidence="1">Alpha-keto-beta-hydroxylacyl reductoisomerase</fullName>
    </alternativeName>
    <alternativeName>
        <fullName evidence="1">Ketol-acid reductoisomerase type 1</fullName>
    </alternativeName>
    <alternativeName>
        <fullName evidence="1">Ketol-acid reductoisomerase type I</fullName>
    </alternativeName>
</protein>
<comment type="function">
    <text evidence="1">Involved in the biosynthesis of branched-chain amino acids (BCAA). Catalyzes an alkyl-migration followed by a ketol-acid reduction of (S)-2-acetolactate (S2AL) to yield (R)-2,3-dihydroxy-isovalerate. In the isomerase reaction, S2AL is rearranged via a Mg-dependent methyl migration to produce 3-hydroxy-3-methyl-2-ketobutyrate (HMKB). In the reductase reaction, this 2-ketoacid undergoes a metal-dependent reduction by NADPH to yield (R)-2,3-dihydroxy-isovalerate.</text>
</comment>
<comment type="catalytic activity">
    <reaction evidence="1">
        <text>(2R)-2,3-dihydroxy-3-methylbutanoate + NADP(+) = (2S)-2-acetolactate + NADPH + H(+)</text>
        <dbReference type="Rhea" id="RHEA:22068"/>
        <dbReference type="ChEBI" id="CHEBI:15378"/>
        <dbReference type="ChEBI" id="CHEBI:49072"/>
        <dbReference type="ChEBI" id="CHEBI:57783"/>
        <dbReference type="ChEBI" id="CHEBI:58349"/>
        <dbReference type="ChEBI" id="CHEBI:58476"/>
        <dbReference type="EC" id="1.1.1.86"/>
    </reaction>
</comment>
<comment type="catalytic activity">
    <reaction evidence="1">
        <text>(2R,3R)-2,3-dihydroxy-3-methylpentanoate + NADP(+) = (S)-2-ethyl-2-hydroxy-3-oxobutanoate + NADPH + H(+)</text>
        <dbReference type="Rhea" id="RHEA:13493"/>
        <dbReference type="ChEBI" id="CHEBI:15378"/>
        <dbReference type="ChEBI" id="CHEBI:49256"/>
        <dbReference type="ChEBI" id="CHEBI:49258"/>
        <dbReference type="ChEBI" id="CHEBI:57783"/>
        <dbReference type="ChEBI" id="CHEBI:58349"/>
        <dbReference type="EC" id="1.1.1.86"/>
    </reaction>
</comment>
<comment type="cofactor">
    <cofactor evidence="1">
        <name>Mg(2+)</name>
        <dbReference type="ChEBI" id="CHEBI:18420"/>
    </cofactor>
    <text evidence="1">Binds 2 magnesium ions per subunit.</text>
</comment>
<comment type="pathway">
    <text evidence="1">Amino-acid biosynthesis; L-isoleucine biosynthesis; L-isoleucine from 2-oxobutanoate: step 2/4.</text>
</comment>
<comment type="pathway">
    <text evidence="1">Amino-acid biosynthesis; L-valine biosynthesis; L-valine from pyruvate: step 2/4.</text>
</comment>
<comment type="similarity">
    <text evidence="1">Belongs to the ketol-acid reductoisomerase family.</text>
</comment>
<proteinExistence type="inferred from homology"/>
<keyword id="KW-0028">Amino-acid biosynthesis</keyword>
<keyword id="KW-0100">Branched-chain amino acid biosynthesis</keyword>
<keyword id="KW-0460">Magnesium</keyword>
<keyword id="KW-0479">Metal-binding</keyword>
<keyword id="KW-0521">NADP</keyword>
<keyword id="KW-0560">Oxidoreductase</keyword>
<name>ILVC_SALAI</name>
<feature type="chain" id="PRO_1000080642" description="Ketol-acid reductoisomerase (NADP(+))">
    <location>
        <begin position="1"/>
        <end position="337"/>
    </location>
</feature>
<feature type="domain" description="KARI N-terminal Rossmann" evidence="2">
    <location>
        <begin position="3"/>
        <end position="183"/>
    </location>
</feature>
<feature type="domain" description="KARI C-terminal knotted" evidence="3">
    <location>
        <begin position="184"/>
        <end position="329"/>
    </location>
</feature>
<feature type="active site" evidence="1">
    <location>
        <position position="109"/>
    </location>
</feature>
<feature type="binding site" evidence="1">
    <location>
        <begin position="26"/>
        <end position="29"/>
    </location>
    <ligand>
        <name>NADP(+)</name>
        <dbReference type="ChEBI" id="CHEBI:58349"/>
    </ligand>
</feature>
<feature type="binding site" evidence="1">
    <location>
        <position position="52"/>
    </location>
    <ligand>
        <name>NADP(+)</name>
        <dbReference type="ChEBI" id="CHEBI:58349"/>
    </ligand>
</feature>
<feature type="binding site" evidence="1">
    <location>
        <position position="54"/>
    </location>
    <ligand>
        <name>NADP(+)</name>
        <dbReference type="ChEBI" id="CHEBI:58349"/>
    </ligand>
</feature>
<feature type="binding site" evidence="1">
    <location>
        <begin position="84"/>
        <end position="87"/>
    </location>
    <ligand>
        <name>NADP(+)</name>
        <dbReference type="ChEBI" id="CHEBI:58349"/>
    </ligand>
</feature>
<feature type="binding site" evidence="1">
    <location>
        <position position="135"/>
    </location>
    <ligand>
        <name>NADP(+)</name>
        <dbReference type="ChEBI" id="CHEBI:58349"/>
    </ligand>
</feature>
<feature type="binding site" evidence="1">
    <location>
        <position position="192"/>
    </location>
    <ligand>
        <name>Mg(2+)</name>
        <dbReference type="ChEBI" id="CHEBI:18420"/>
        <label>1</label>
    </ligand>
</feature>
<feature type="binding site" evidence="1">
    <location>
        <position position="192"/>
    </location>
    <ligand>
        <name>Mg(2+)</name>
        <dbReference type="ChEBI" id="CHEBI:18420"/>
        <label>2</label>
    </ligand>
</feature>
<feature type="binding site" evidence="1">
    <location>
        <position position="196"/>
    </location>
    <ligand>
        <name>Mg(2+)</name>
        <dbReference type="ChEBI" id="CHEBI:18420"/>
        <label>1</label>
    </ligand>
</feature>
<feature type="binding site" evidence="1">
    <location>
        <position position="228"/>
    </location>
    <ligand>
        <name>Mg(2+)</name>
        <dbReference type="ChEBI" id="CHEBI:18420"/>
        <label>2</label>
    </ligand>
</feature>
<feature type="binding site" evidence="1">
    <location>
        <position position="232"/>
    </location>
    <ligand>
        <name>Mg(2+)</name>
        <dbReference type="ChEBI" id="CHEBI:18420"/>
        <label>2</label>
    </ligand>
</feature>
<feature type="binding site" evidence="1">
    <location>
        <position position="253"/>
    </location>
    <ligand>
        <name>substrate</name>
    </ligand>
</feature>
<accession>A8M5F9</accession>
<reference key="1">
    <citation type="submission" date="2007-10" db="EMBL/GenBank/DDBJ databases">
        <title>Complete sequence of Salinispora arenicola CNS-205.</title>
        <authorList>
            <consortium name="US DOE Joint Genome Institute"/>
            <person name="Copeland A."/>
            <person name="Lucas S."/>
            <person name="Lapidus A."/>
            <person name="Barry K."/>
            <person name="Glavina del Rio T."/>
            <person name="Dalin E."/>
            <person name="Tice H."/>
            <person name="Pitluck S."/>
            <person name="Foster B."/>
            <person name="Schmutz J."/>
            <person name="Larimer F."/>
            <person name="Land M."/>
            <person name="Hauser L."/>
            <person name="Kyrpides N."/>
            <person name="Ivanova N."/>
            <person name="Jensen P.R."/>
            <person name="Moore B.S."/>
            <person name="Penn K."/>
            <person name="Jenkins C."/>
            <person name="Udwary D."/>
            <person name="Xiang L."/>
            <person name="Gontang E."/>
            <person name="Richardson P."/>
        </authorList>
    </citation>
    <scope>NUCLEOTIDE SEQUENCE [LARGE SCALE GENOMIC DNA]</scope>
    <source>
        <strain>CNS-205</strain>
    </source>
</reference>
<dbReference type="EC" id="1.1.1.86" evidence="1"/>
<dbReference type="EMBL" id="CP000850">
    <property type="protein sequence ID" value="ABV97033.1"/>
    <property type="molecule type" value="Genomic_DNA"/>
</dbReference>
<dbReference type="SMR" id="A8M5F9"/>
<dbReference type="STRING" id="391037.Sare_1125"/>
<dbReference type="KEGG" id="saq:Sare_1125"/>
<dbReference type="PATRIC" id="fig|391037.6.peg.1141"/>
<dbReference type="eggNOG" id="COG0059">
    <property type="taxonomic scope" value="Bacteria"/>
</dbReference>
<dbReference type="HOGENOM" id="CLU_033821_0_1_11"/>
<dbReference type="OrthoDB" id="9804088at2"/>
<dbReference type="UniPathway" id="UPA00047">
    <property type="reaction ID" value="UER00056"/>
</dbReference>
<dbReference type="UniPathway" id="UPA00049">
    <property type="reaction ID" value="UER00060"/>
</dbReference>
<dbReference type="GO" id="GO:0005829">
    <property type="term" value="C:cytosol"/>
    <property type="evidence" value="ECO:0007669"/>
    <property type="project" value="TreeGrafter"/>
</dbReference>
<dbReference type="GO" id="GO:0004455">
    <property type="term" value="F:ketol-acid reductoisomerase activity"/>
    <property type="evidence" value="ECO:0007669"/>
    <property type="project" value="UniProtKB-UniRule"/>
</dbReference>
<dbReference type="GO" id="GO:0000287">
    <property type="term" value="F:magnesium ion binding"/>
    <property type="evidence" value="ECO:0007669"/>
    <property type="project" value="UniProtKB-UniRule"/>
</dbReference>
<dbReference type="GO" id="GO:0050661">
    <property type="term" value="F:NADP binding"/>
    <property type="evidence" value="ECO:0007669"/>
    <property type="project" value="InterPro"/>
</dbReference>
<dbReference type="GO" id="GO:0009097">
    <property type="term" value="P:isoleucine biosynthetic process"/>
    <property type="evidence" value="ECO:0007669"/>
    <property type="project" value="UniProtKB-UniRule"/>
</dbReference>
<dbReference type="GO" id="GO:0009099">
    <property type="term" value="P:L-valine biosynthetic process"/>
    <property type="evidence" value="ECO:0007669"/>
    <property type="project" value="UniProtKB-UniRule"/>
</dbReference>
<dbReference type="FunFam" id="3.40.50.720:FF:000023">
    <property type="entry name" value="Ketol-acid reductoisomerase (NADP(+))"/>
    <property type="match status" value="1"/>
</dbReference>
<dbReference type="Gene3D" id="6.10.240.10">
    <property type="match status" value="1"/>
</dbReference>
<dbReference type="Gene3D" id="3.40.50.720">
    <property type="entry name" value="NAD(P)-binding Rossmann-like Domain"/>
    <property type="match status" value="1"/>
</dbReference>
<dbReference type="HAMAP" id="MF_00435">
    <property type="entry name" value="IlvC"/>
    <property type="match status" value="1"/>
</dbReference>
<dbReference type="InterPro" id="IPR008927">
    <property type="entry name" value="6-PGluconate_DH-like_C_sf"/>
</dbReference>
<dbReference type="InterPro" id="IPR013023">
    <property type="entry name" value="KARI"/>
</dbReference>
<dbReference type="InterPro" id="IPR000506">
    <property type="entry name" value="KARI_C"/>
</dbReference>
<dbReference type="InterPro" id="IPR013116">
    <property type="entry name" value="KARI_N"/>
</dbReference>
<dbReference type="InterPro" id="IPR014359">
    <property type="entry name" value="KARI_prok"/>
</dbReference>
<dbReference type="InterPro" id="IPR036291">
    <property type="entry name" value="NAD(P)-bd_dom_sf"/>
</dbReference>
<dbReference type="NCBIfam" id="TIGR00465">
    <property type="entry name" value="ilvC"/>
    <property type="match status" value="1"/>
</dbReference>
<dbReference type="NCBIfam" id="NF004017">
    <property type="entry name" value="PRK05479.1"/>
    <property type="match status" value="1"/>
</dbReference>
<dbReference type="NCBIfam" id="NF009940">
    <property type="entry name" value="PRK13403.1"/>
    <property type="match status" value="1"/>
</dbReference>
<dbReference type="PANTHER" id="PTHR21371">
    <property type="entry name" value="KETOL-ACID REDUCTOISOMERASE, MITOCHONDRIAL"/>
    <property type="match status" value="1"/>
</dbReference>
<dbReference type="PANTHER" id="PTHR21371:SF1">
    <property type="entry name" value="KETOL-ACID REDUCTOISOMERASE, MITOCHONDRIAL"/>
    <property type="match status" value="1"/>
</dbReference>
<dbReference type="Pfam" id="PF01450">
    <property type="entry name" value="KARI_C"/>
    <property type="match status" value="1"/>
</dbReference>
<dbReference type="Pfam" id="PF07991">
    <property type="entry name" value="KARI_N"/>
    <property type="match status" value="1"/>
</dbReference>
<dbReference type="PIRSF" id="PIRSF000116">
    <property type="entry name" value="IlvC_gammaproteo"/>
    <property type="match status" value="1"/>
</dbReference>
<dbReference type="SUPFAM" id="SSF48179">
    <property type="entry name" value="6-phosphogluconate dehydrogenase C-terminal domain-like"/>
    <property type="match status" value="1"/>
</dbReference>
<dbReference type="SUPFAM" id="SSF51735">
    <property type="entry name" value="NAD(P)-binding Rossmann-fold domains"/>
    <property type="match status" value="1"/>
</dbReference>
<dbReference type="PROSITE" id="PS51851">
    <property type="entry name" value="KARI_C"/>
    <property type="match status" value="1"/>
</dbReference>
<dbReference type="PROSITE" id="PS51850">
    <property type="entry name" value="KARI_N"/>
    <property type="match status" value="1"/>
</dbReference>
<gene>
    <name evidence="1" type="primary">ilvC</name>
    <name type="ordered locus">Sare_1125</name>
</gene>
<evidence type="ECO:0000255" key="1">
    <source>
        <dbReference type="HAMAP-Rule" id="MF_00435"/>
    </source>
</evidence>
<evidence type="ECO:0000255" key="2">
    <source>
        <dbReference type="PROSITE-ProRule" id="PRU01197"/>
    </source>
</evidence>
<evidence type="ECO:0000255" key="3">
    <source>
        <dbReference type="PROSITE-ProRule" id="PRU01198"/>
    </source>
</evidence>